<gene>
    <name evidence="1" type="primary">smpB</name>
    <name type="ordered locus">SPCG_0951</name>
</gene>
<keyword id="KW-0963">Cytoplasm</keyword>
<keyword id="KW-0694">RNA-binding</keyword>
<organism>
    <name type="scientific">Streptococcus pneumoniae (strain CGSP14)</name>
    <dbReference type="NCBI Taxonomy" id="516950"/>
    <lineage>
        <taxon>Bacteria</taxon>
        <taxon>Bacillati</taxon>
        <taxon>Bacillota</taxon>
        <taxon>Bacilli</taxon>
        <taxon>Lactobacillales</taxon>
        <taxon>Streptococcaceae</taxon>
        <taxon>Streptococcus</taxon>
    </lineage>
</organism>
<feature type="chain" id="PRO_1000090193" description="SsrA-binding protein">
    <location>
        <begin position="1"/>
        <end position="155"/>
    </location>
</feature>
<proteinExistence type="inferred from homology"/>
<sequence>MAKGEGKVVAQNKKARHDYTIVDTLEAGMVLTGTEIKSVRAARINLKDGFAQVKNGEVWLSNVHIAPYEEGNIWNQEPERRRKLLLHKKQIQKLEQEIKGTGMTLVPLKVYIKDGYAKLLLGLAKGKHDYDKRESIKRREQNRDIARVMKAVNQR</sequence>
<reference key="1">
    <citation type="journal article" date="2009" name="BMC Genomics">
        <title>Genome evolution driven by host adaptations results in a more virulent and antimicrobial-resistant Streptococcus pneumoniae serotype 14.</title>
        <authorList>
            <person name="Ding F."/>
            <person name="Tang P."/>
            <person name="Hsu M.-H."/>
            <person name="Cui P."/>
            <person name="Hu S."/>
            <person name="Yu J."/>
            <person name="Chiu C.-H."/>
        </authorList>
    </citation>
    <scope>NUCLEOTIDE SEQUENCE [LARGE SCALE GENOMIC DNA]</scope>
    <source>
        <strain>CGSP14</strain>
    </source>
</reference>
<comment type="function">
    <text evidence="1">Required for rescue of stalled ribosomes mediated by trans-translation. Binds to transfer-messenger RNA (tmRNA), required for stable association of tmRNA with ribosomes. tmRNA and SmpB together mimic tRNA shape, replacing the anticodon stem-loop with SmpB. tmRNA is encoded by the ssrA gene; the 2 termini fold to resemble tRNA(Ala) and it encodes a 'tag peptide', a short internal open reading frame. During trans-translation Ala-aminoacylated tmRNA acts like a tRNA, entering the A-site of stalled ribosomes, displacing the stalled mRNA. The ribosome then switches to translate the ORF on the tmRNA; the nascent peptide is terminated with the 'tag peptide' encoded by the tmRNA and targeted for degradation. The ribosome is freed to recommence translation, which seems to be the essential function of trans-translation.</text>
</comment>
<comment type="subcellular location">
    <subcellularLocation>
        <location evidence="1">Cytoplasm</location>
    </subcellularLocation>
    <text evidence="1">The tmRNA-SmpB complex associates with stalled 70S ribosomes.</text>
</comment>
<comment type="similarity">
    <text evidence="1">Belongs to the SmpB family.</text>
</comment>
<protein>
    <recommendedName>
        <fullName evidence="1">SsrA-binding protein</fullName>
    </recommendedName>
    <alternativeName>
        <fullName evidence="1">Small protein B</fullName>
    </alternativeName>
</protein>
<name>SSRP_STRPS</name>
<accession>B2IPC9</accession>
<dbReference type="EMBL" id="CP001033">
    <property type="protein sequence ID" value="ACB90203.1"/>
    <property type="molecule type" value="Genomic_DNA"/>
</dbReference>
<dbReference type="RefSeq" id="WP_001051747.1">
    <property type="nucleotide sequence ID" value="NC_010582.1"/>
</dbReference>
<dbReference type="SMR" id="B2IPC9"/>
<dbReference type="KEGG" id="spw:SPCG_0951"/>
<dbReference type="HOGENOM" id="CLU_108953_0_0_9"/>
<dbReference type="GO" id="GO:0005829">
    <property type="term" value="C:cytosol"/>
    <property type="evidence" value="ECO:0007669"/>
    <property type="project" value="TreeGrafter"/>
</dbReference>
<dbReference type="GO" id="GO:0003723">
    <property type="term" value="F:RNA binding"/>
    <property type="evidence" value="ECO:0007669"/>
    <property type="project" value="UniProtKB-UniRule"/>
</dbReference>
<dbReference type="GO" id="GO:0070929">
    <property type="term" value="P:trans-translation"/>
    <property type="evidence" value="ECO:0007669"/>
    <property type="project" value="UniProtKB-UniRule"/>
</dbReference>
<dbReference type="CDD" id="cd09294">
    <property type="entry name" value="SmpB"/>
    <property type="match status" value="1"/>
</dbReference>
<dbReference type="Gene3D" id="2.40.280.10">
    <property type="match status" value="1"/>
</dbReference>
<dbReference type="HAMAP" id="MF_00023">
    <property type="entry name" value="SmpB"/>
    <property type="match status" value="1"/>
</dbReference>
<dbReference type="InterPro" id="IPR023620">
    <property type="entry name" value="SmpB"/>
</dbReference>
<dbReference type="InterPro" id="IPR000037">
    <property type="entry name" value="SsrA-bd_prot"/>
</dbReference>
<dbReference type="InterPro" id="IPR020081">
    <property type="entry name" value="SsrA-bd_prot_CS"/>
</dbReference>
<dbReference type="NCBIfam" id="NF003843">
    <property type="entry name" value="PRK05422.1"/>
    <property type="match status" value="1"/>
</dbReference>
<dbReference type="NCBIfam" id="TIGR00086">
    <property type="entry name" value="smpB"/>
    <property type="match status" value="1"/>
</dbReference>
<dbReference type="PANTHER" id="PTHR30308:SF2">
    <property type="entry name" value="SSRA-BINDING PROTEIN"/>
    <property type="match status" value="1"/>
</dbReference>
<dbReference type="PANTHER" id="PTHR30308">
    <property type="entry name" value="TMRNA-BINDING COMPONENT OF TRANS-TRANSLATION TAGGING COMPLEX"/>
    <property type="match status" value="1"/>
</dbReference>
<dbReference type="Pfam" id="PF01668">
    <property type="entry name" value="SmpB"/>
    <property type="match status" value="1"/>
</dbReference>
<dbReference type="SUPFAM" id="SSF74982">
    <property type="entry name" value="Small protein B (SmpB)"/>
    <property type="match status" value="1"/>
</dbReference>
<dbReference type="PROSITE" id="PS01317">
    <property type="entry name" value="SSRP"/>
    <property type="match status" value="1"/>
</dbReference>
<evidence type="ECO:0000255" key="1">
    <source>
        <dbReference type="HAMAP-Rule" id="MF_00023"/>
    </source>
</evidence>